<comment type="function">
    <text evidence="1">Catalyzes the conversion of (8S)-3',8-cyclo-7,8-dihydroguanosine 5'-triphosphate to cyclic pyranopterin monophosphate (cPMP).</text>
</comment>
<comment type="catalytic activity">
    <reaction evidence="1">
        <text>(8S)-3',8-cyclo-7,8-dihydroguanosine 5'-triphosphate = cyclic pyranopterin phosphate + diphosphate</text>
        <dbReference type="Rhea" id="RHEA:49580"/>
        <dbReference type="ChEBI" id="CHEBI:33019"/>
        <dbReference type="ChEBI" id="CHEBI:59648"/>
        <dbReference type="ChEBI" id="CHEBI:131766"/>
        <dbReference type="EC" id="4.6.1.17"/>
    </reaction>
</comment>
<comment type="pathway">
    <text evidence="1">Cofactor biosynthesis; molybdopterin biosynthesis.</text>
</comment>
<comment type="subunit">
    <text evidence="1">Homohexamer; trimer of dimers.</text>
</comment>
<comment type="similarity">
    <text evidence="1">Belongs to the MoaC family.</text>
</comment>
<gene>
    <name evidence="1" type="primary">moaC</name>
    <name type="ordered locus">XAC1098</name>
</gene>
<proteinExistence type="inferred from homology"/>
<sequence length="165" mass="17438">MPANSRSARLTHLDDAGLPTMVDVSDKAVTARSATAESRVRFPAAVAAQLRANGLRSAKGGIVETAVIAGTMAVKRTHELIPFCHPLPIDACRFGIDWAGEQVLDIRCTVRCVHRTGVEMEALTGASVAALTIYDMCKALSHSMSIGPTKLVSKRGGKRDIGAAQ</sequence>
<dbReference type="EC" id="4.6.1.17" evidence="1"/>
<dbReference type="EMBL" id="AE008923">
    <property type="protein sequence ID" value="AAM35972.1"/>
    <property type="molecule type" value="Genomic_DNA"/>
</dbReference>
<dbReference type="RefSeq" id="WP_011050702.1">
    <property type="nucleotide sequence ID" value="NC_003919.1"/>
</dbReference>
<dbReference type="SMR" id="Q8PNH0"/>
<dbReference type="GeneID" id="66910276"/>
<dbReference type="KEGG" id="xac:XAC1098"/>
<dbReference type="eggNOG" id="COG0315">
    <property type="taxonomic scope" value="Bacteria"/>
</dbReference>
<dbReference type="HOGENOM" id="CLU_074693_1_0_6"/>
<dbReference type="UniPathway" id="UPA00344"/>
<dbReference type="Proteomes" id="UP000000576">
    <property type="component" value="Chromosome"/>
</dbReference>
<dbReference type="GO" id="GO:0061799">
    <property type="term" value="F:cyclic pyranopterin monophosphate synthase activity"/>
    <property type="evidence" value="ECO:0007669"/>
    <property type="project" value="UniProtKB-UniRule"/>
</dbReference>
<dbReference type="GO" id="GO:0006777">
    <property type="term" value="P:Mo-molybdopterin cofactor biosynthetic process"/>
    <property type="evidence" value="ECO:0007669"/>
    <property type="project" value="UniProtKB-UniRule"/>
</dbReference>
<dbReference type="CDD" id="cd01420">
    <property type="entry name" value="MoaC_PE"/>
    <property type="match status" value="1"/>
</dbReference>
<dbReference type="Gene3D" id="3.30.70.640">
    <property type="entry name" value="Molybdopterin cofactor biosynthesis C (MoaC) domain"/>
    <property type="match status" value="1"/>
</dbReference>
<dbReference type="HAMAP" id="MF_01224_B">
    <property type="entry name" value="MoaC_B"/>
    <property type="match status" value="1"/>
</dbReference>
<dbReference type="InterPro" id="IPR023045">
    <property type="entry name" value="MoaC"/>
</dbReference>
<dbReference type="InterPro" id="IPR047594">
    <property type="entry name" value="MoaC_bact/euk"/>
</dbReference>
<dbReference type="InterPro" id="IPR036522">
    <property type="entry name" value="MoaC_sf"/>
</dbReference>
<dbReference type="InterPro" id="IPR002820">
    <property type="entry name" value="Mopterin_CF_biosynth-C_dom"/>
</dbReference>
<dbReference type="NCBIfam" id="TIGR00581">
    <property type="entry name" value="moaC"/>
    <property type="match status" value="1"/>
</dbReference>
<dbReference type="NCBIfam" id="NF006870">
    <property type="entry name" value="PRK09364.1"/>
    <property type="match status" value="1"/>
</dbReference>
<dbReference type="Pfam" id="PF01967">
    <property type="entry name" value="MoaC"/>
    <property type="match status" value="1"/>
</dbReference>
<dbReference type="SUPFAM" id="SSF55040">
    <property type="entry name" value="Molybdenum cofactor biosynthesis protein C, MoaC"/>
    <property type="match status" value="1"/>
</dbReference>
<feature type="chain" id="PRO_0000097845" description="Cyclic pyranopterin monophosphate synthase">
    <location>
        <begin position="1"/>
        <end position="165"/>
    </location>
</feature>
<feature type="active site" evidence="1">
    <location>
        <position position="135"/>
    </location>
</feature>
<feature type="binding site" evidence="1">
    <location>
        <begin position="83"/>
        <end position="85"/>
    </location>
    <ligand>
        <name>substrate</name>
    </ligand>
</feature>
<feature type="binding site" evidence="1">
    <location>
        <begin position="120"/>
        <end position="121"/>
    </location>
    <ligand>
        <name>substrate</name>
    </ligand>
</feature>
<evidence type="ECO:0000255" key="1">
    <source>
        <dbReference type="HAMAP-Rule" id="MF_01224"/>
    </source>
</evidence>
<reference key="1">
    <citation type="journal article" date="2002" name="Nature">
        <title>Comparison of the genomes of two Xanthomonas pathogens with differing host specificities.</title>
        <authorList>
            <person name="da Silva A.C.R."/>
            <person name="Ferro J.A."/>
            <person name="Reinach F.C."/>
            <person name="Farah C.S."/>
            <person name="Furlan L.R."/>
            <person name="Quaggio R.B."/>
            <person name="Monteiro-Vitorello C.B."/>
            <person name="Van Sluys M.A."/>
            <person name="Almeida N.F. Jr."/>
            <person name="Alves L.M.C."/>
            <person name="do Amaral A.M."/>
            <person name="Bertolini M.C."/>
            <person name="Camargo L.E.A."/>
            <person name="Camarotte G."/>
            <person name="Cannavan F."/>
            <person name="Cardozo J."/>
            <person name="Chambergo F."/>
            <person name="Ciapina L.P."/>
            <person name="Cicarelli R.M.B."/>
            <person name="Coutinho L.L."/>
            <person name="Cursino-Santos J.R."/>
            <person name="El-Dorry H."/>
            <person name="Faria J.B."/>
            <person name="Ferreira A.J.S."/>
            <person name="Ferreira R.C.C."/>
            <person name="Ferro M.I.T."/>
            <person name="Formighieri E.F."/>
            <person name="Franco M.C."/>
            <person name="Greggio C.C."/>
            <person name="Gruber A."/>
            <person name="Katsuyama A.M."/>
            <person name="Kishi L.T."/>
            <person name="Leite R.P."/>
            <person name="Lemos E.G.M."/>
            <person name="Lemos M.V.F."/>
            <person name="Locali E.C."/>
            <person name="Machado M.A."/>
            <person name="Madeira A.M.B.N."/>
            <person name="Martinez-Rossi N.M."/>
            <person name="Martins E.C."/>
            <person name="Meidanis J."/>
            <person name="Menck C.F.M."/>
            <person name="Miyaki C.Y."/>
            <person name="Moon D.H."/>
            <person name="Moreira L.M."/>
            <person name="Novo M.T.M."/>
            <person name="Okura V.K."/>
            <person name="Oliveira M.C."/>
            <person name="Oliveira V.R."/>
            <person name="Pereira H.A."/>
            <person name="Rossi A."/>
            <person name="Sena J.A.D."/>
            <person name="Silva C."/>
            <person name="de Souza R.F."/>
            <person name="Spinola L.A.F."/>
            <person name="Takita M.A."/>
            <person name="Tamura R.E."/>
            <person name="Teixeira E.C."/>
            <person name="Tezza R.I.D."/>
            <person name="Trindade dos Santos M."/>
            <person name="Truffi D."/>
            <person name="Tsai S.M."/>
            <person name="White F.F."/>
            <person name="Setubal J.C."/>
            <person name="Kitajima J.P."/>
        </authorList>
    </citation>
    <scope>NUCLEOTIDE SEQUENCE [LARGE SCALE GENOMIC DNA]</scope>
    <source>
        <strain>306</strain>
    </source>
</reference>
<keyword id="KW-0456">Lyase</keyword>
<keyword id="KW-0501">Molybdenum cofactor biosynthesis</keyword>
<protein>
    <recommendedName>
        <fullName evidence="1">Cyclic pyranopterin monophosphate synthase</fullName>
        <ecNumber evidence="1">4.6.1.17</ecNumber>
    </recommendedName>
    <alternativeName>
        <fullName evidence="1">Molybdenum cofactor biosynthesis protein C</fullName>
    </alternativeName>
</protein>
<name>MOAC_XANAC</name>
<accession>Q8PNH0</accession>
<organism>
    <name type="scientific">Xanthomonas axonopodis pv. citri (strain 306)</name>
    <dbReference type="NCBI Taxonomy" id="190486"/>
    <lineage>
        <taxon>Bacteria</taxon>
        <taxon>Pseudomonadati</taxon>
        <taxon>Pseudomonadota</taxon>
        <taxon>Gammaproteobacteria</taxon>
        <taxon>Lysobacterales</taxon>
        <taxon>Lysobacteraceae</taxon>
        <taxon>Xanthomonas</taxon>
    </lineage>
</organism>